<organism>
    <name type="scientific">Rickettsia akari (strain Hartford)</name>
    <dbReference type="NCBI Taxonomy" id="293614"/>
    <lineage>
        <taxon>Bacteria</taxon>
        <taxon>Pseudomonadati</taxon>
        <taxon>Pseudomonadota</taxon>
        <taxon>Alphaproteobacteria</taxon>
        <taxon>Rickettsiales</taxon>
        <taxon>Rickettsiaceae</taxon>
        <taxon>Rickettsieae</taxon>
        <taxon>Rickettsia</taxon>
        <taxon>spotted fever group</taxon>
    </lineage>
</organism>
<keyword id="KW-0028">Amino-acid biosynthesis</keyword>
<keyword id="KW-0963">Cytoplasm</keyword>
<keyword id="KW-0554">One-carbon metabolism</keyword>
<keyword id="KW-0663">Pyridoxal phosphate</keyword>
<keyword id="KW-0808">Transferase</keyword>
<accession>A8GPR4</accession>
<protein>
    <recommendedName>
        <fullName evidence="1">Serine hydroxymethyltransferase</fullName>
        <shortName evidence="1">SHMT</shortName>
        <shortName evidence="1">Serine methylase</shortName>
        <ecNumber evidence="1">2.1.2.1</ecNumber>
    </recommendedName>
</protein>
<gene>
    <name evidence="1" type="primary">glyA</name>
    <name type="ordered locus">A1C_05770</name>
</gene>
<dbReference type="EC" id="2.1.2.1" evidence="1"/>
<dbReference type="EMBL" id="CP000847">
    <property type="protein sequence ID" value="ABV75389.1"/>
    <property type="molecule type" value="Genomic_DNA"/>
</dbReference>
<dbReference type="RefSeq" id="WP_012150018.1">
    <property type="nucleotide sequence ID" value="NC_009881.1"/>
</dbReference>
<dbReference type="SMR" id="A8GPR4"/>
<dbReference type="STRING" id="293614.A1C_05770"/>
<dbReference type="KEGG" id="rak:A1C_05770"/>
<dbReference type="eggNOG" id="COG0112">
    <property type="taxonomic scope" value="Bacteria"/>
</dbReference>
<dbReference type="HOGENOM" id="CLU_022477_2_1_5"/>
<dbReference type="UniPathway" id="UPA00193"/>
<dbReference type="UniPathway" id="UPA00288">
    <property type="reaction ID" value="UER01023"/>
</dbReference>
<dbReference type="Proteomes" id="UP000006830">
    <property type="component" value="Chromosome"/>
</dbReference>
<dbReference type="GO" id="GO:0005829">
    <property type="term" value="C:cytosol"/>
    <property type="evidence" value="ECO:0007669"/>
    <property type="project" value="TreeGrafter"/>
</dbReference>
<dbReference type="GO" id="GO:0004372">
    <property type="term" value="F:glycine hydroxymethyltransferase activity"/>
    <property type="evidence" value="ECO:0007669"/>
    <property type="project" value="UniProtKB-UniRule"/>
</dbReference>
<dbReference type="GO" id="GO:0030170">
    <property type="term" value="F:pyridoxal phosphate binding"/>
    <property type="evidence" value="ECO:0007669"/>
    <property type="project" value="UniProtKB-UniRule"/>
</dbReference>
<dbReference type="GO" id="GO:0019264">
    <property type="term" value="P:glycine biosynthetic process from serine"/>
    <property type="evidence" value="ECO:0007669"/>
    <property type="project" value="UniProtKB-UniRule"/>
</dbReference>
<dbReference type="GO" id="GO:0035999">
    <property type="term" value="P:tetrahydrofolate interconversion"/>
    <property type="evidence" value="ECO:0007669"/>
    <property type="project" value="UniProtKB-UniRule"/>
</dbReference>
<dbReference type="CDD" id="cd00378">
    <property type="entry name" value="SHMT"/>
    <property type="match status" value="1"/>
</dbReference>
<dbReference type="FunFam" id="3.40.640.10:FF:000001">
    <property type="entry name" value="Serine hydroxymethyltransferase"/>
    <property type="match status" value="1"/>
</dbReference>
<dbReference type="FunFam" id="3.90.1150.10:FF:000003">
    <property type="entry name" value="Serine hydroxymethyltransferase"/>
    <property type="match status" value="1"/>
</dbReference>
<dbReference type="Gene3D" id="3.90.1150.10">
    <property type="entry name" value="Aspartate Aminotransferase, domain 1"/>
    <property type="match status" value="1"/>
</dbReference>
<dbReference type="Gene3D" id="3.40.640.10">
    <property type="entry name" value="Type I PLP-dependent aspartate aminotransferase-like (Major domain)"/>
    <property type="match status" value="1"/>
</dbReference>
<dbReference type="HAMAP" id="MF_00051">
    <property type="entry name" value="SHMT"/>
    <property type="match status" value="1"/>
</dbReference>
<dbReference type="InterPro" id="IPR015424">
    <property type="entry name" value="PyrdxlP-dep_Trfase"/>
</dbReference>
<dbReference type="InterPro" id="IPR015421">
    <property type="entry name" value="PyrdxlP-dep_Trfase_major"/>
</dbReference>
<dbReference type="InterPro" id="IPR015422">
    <property type="entry name" value="PyrdxlP-dep_Trfase_small"/>
</dbReference>
<dbReference type="InterPro" id="IPR001085">
    <property type="entry name" value="Ser_HO-MeTrfase"/>
</dbReference>
<dbReference type="InterPro" id="IPR049943">
    <property type="entry name" value="Ser_HO-MeTrfase-like"/>
</dbReference>
<dbReference type="InterPro" id="IPR019798">
    <property type="entry name" value="Ser_HO-MeTrfase_PLP_BS"/>
</dbReference>
<dbReference type="InterPro" id="IPR039429">
    <property type="entry name" value="SHMT-like_dom"/>
</dbReference>
<dbReference type="NCBIfam" id="NF000586">
    <property type="entry name" value="PRK00011.1"/>
    <property type="match status" value="1"/>
</dbReference>
<dbReference type="PANTHER" id="PTHR11680">
    <property type="entry name" value="SERINE HYDROXYMETHYLTRANSFERASE"/>
    <property type="match status" value="1"/>
</dbReference>
<dbReference type="PANTHER" id="PTHR11680:SF35">
    <property type="entry name" value="SERINE HYDROXYMETHYLTRANSFERASE 1"/>
    <property type="match status" value="1"/>
</dbReference>
<dbReference type="Pfam" id="PF00464">
    <property type="entry name" value="SHMT"/>
    <property type="match status" value="1"/>
</dbReference>
<dbReference type="PIRSF" id="PIRSF000412">
    <property type="entry name" value="SHMT"/>
    <property type="match status" value="1"/>
</dbReference>
<dbReference type="SUPFAM" id="SSF53383">
    <property type="entry name" value="PLP-dependent transferases"/>
    <property type="match status" value="1"/>
</dbReference>
<dbReference type="PROSITE" id="PS00096">
    <property type="entry name" value="SHMT"/>
    <property type="match status" value="1"/>
</dbReference>
<comment type="function">
    <text evidence="1">Catalyzes the reversible interconversion of serine and glycine with tetrahydrofolate (THF) serving as the one-carbon carrier. This reaction serves as the major source of one-carbon groups required for the biosynthesis of purines, thymidylate, methionine, and other important biomolecules. Also exhibits THF-independent aldolase activity toward beta-hydroxyamino acids, producing glycine and aldehydes, via a retro-aldol mechanism.</text>
</comment>
<comment type="catalytic activity">
    <reaction evidence="1">
        <text>(6R)-5,10-methylene-5,6,7,8-tetrahydrofolate + glycine + H2O = (6S)-5,6,7,8-tetrahydrofolate + L-serine</text>
        <dbReference type="Rhea" id="RHEA:15481"/>
        <dbReference type="ChEBI" id="CHEBI:15377"/>
        <dbReference type="ChEBI" id="CHEBI:15636"/>
        <dbReference type="ChEBI" id="CHEBI:33384"/>
        <dbReference type="ChEBI" id="CHEBI:57305"/>
        <dbReference type="ChEBI" id="CHEBI:57453"/>
        <dbReference type="EC" id="2.1.2.1"/>
    </reaction>
</comment>
<comment type="cofactor">
    <cofactor evidence="1">
        <name>pyridoxal 5'-phosphate</name>
        <dbReference type="ChEBI" id="CHEBI:597326"/>
    </cofactor>
</comment>
<comment type="pathway">
    <text evidence="1">One-carbon metabolism; tetrahydrofolate interconversion.</text>
</comment>
<comment type="pathway">
    <text evidence="1">Amino-acid biosynthesis; glycine biosynthesis; glycine from L-serine: step 1/1.</text>
</comment>
<comment type="subunit">
    <text evidence="1">Homodimer.</text>
</comment>
<comment type="subcellular location">
    <subcellularLocation>
        <location evidence="1">Cytoplasm</location>
    </subcellularLocation>
</comment>
<comment type="similarity">
    <text evidence="1">Belongs to the SHMT family.</text>
</comment>
<proteinExistence type="inferred from homology"/>
<reference key="1">
    <citation type="submission" date="2007-09" db="EMBL/GenBank/DDBJ databases">
        <title>Complete genome sequence of Rickettsia akari.</title>
        <authorList>
            <person name="Madan A."/>
            <person name="Fahey J."/>
            <person name="Helton E."/>
            <person name="Ketteman M."/>
            <person name="Madan A."/>
            <person name="Rodrigues S."/>
            <person name="Sanchez A."/>
            <person name="Whiting M."/>
            <person name="Dasch G."/>
            <person name="Eremeeva M."/>
        </authorList>
    </citation>
    <scope>NUCLEOTIDE SEQUENCE [LARGE SCALE GENOMIC DNA]</scope>
    <source>
        <strain>Hartford</strain>
    </source>
</reference>
<sequence length="420" mass="46041">MNIFNNNLHETDKEINEIIKHEKLRQSSVIELIASENFVSPAVLEAQGSILTNKYAEGYSGKRFYNGCEEVDKAENLAIERVKKLFNCKYANVQPHSGSQANQAVYLTLLQPGDTILGMSLDSGGHLTHGASPNMSGKWFNAVSYGVNKKTYLIDYDEIERLAVLHKPKLLIAGFSAYPRNIDFTRFREIADKVGAYFMADIAHIAGLVATGEHQSPISYAHVVTSTTHKTLRGPRGGLVLSDDEEIGKKINSALFPGLQGGPLMHIVAAKAVAFLESLQPEYKSYIKQIISNAKALASSLQERGYDILTGGTDNHIVLVDLRKNGITGKLAANSLDNAGITCNKNAIPFDETSPFITSGIRLGTPACTTRGFKEQDFVSVGHMVADILDGLKNNKDNTKAEQQVLHKVTKLIKLFPFYD</sequence>
<feature type="chain" id="PRO_1000006306" description="Serine hydroxymethyltransferase">
    <location>
        <begin position="1"/>
        <end position="420"/>
    </location>
</feature>
<feature type="binding site" evidence="1">
    <location>
        <position position="121"/>
    </location>
    <ligand>
        <name>(6S)-5,6,7,8-tetrahydrofolate</name>
        <dbReference type="ChEBI" id="CHEBI:57453"/>
    </ligand>
</feature>
<feature type="binding site" evidence="1">
    <location>
        <begin position="125"/>
        <end position="127"/>
    </location>
    <ligand>
        <name>(6S)-5,6,7,8-tetrahydrofolate</name>
        <dbReference type="ChEBI" id="CHEBI:57453"/>
    </ligand>
</feature>
<feature type="binding site" evidence="1">
    <location>
        <position position="246"/>
    </location>
    <ligand>
        <name>(6S)-5,6,7,8-tetrahydrofolate</name>
        <dbReference type="ChEBI" id="CHEBI:57453"/>
    </ligand>
</feature>
<feature type="binding site" evidence="1">
    <location>
        <begin position="354"/>
        <end position="356"/>
    </location>
    <ligand>
        <name>(6S)-5,6,7,8-tetrahydrofolate</name>
        <dbReference type="ChEBI" id="CHEBI:57453"/>
    </ligand>
</feature>
<feature type="site" description="Plays an important role in substrate specificity" evidence="1">
    <location>
        <position position="229"/>
    </location>
</feature>
<feature type="modified residue" description="N6-(pyridoxal phosphate)lysine" evidence="1">
    <location>
        <position position="230"/>
    </location>
</feature>
<evidence type="ECO:0000255" key="1">
    <source>
        <dbReference type="HAMAP-Rule" id="MF_00051"/>
    </source>
</evidence>
<name>GLYA_RICAH</name>